<dbReference type="EMBL" id="AL591981">
    <property type="protein sequence ID" value="CAC99780.1"/>
    <property type="molecule type" value="Genomic_DNA"/>
</dbReference>
<dbReference type="PIR" id="AF1287">
    <property type="entry name" value="AF1287"/>
</dbReference>
<dbReference type="RefSeq" id="NP_465227.1">
    <property type="nucleotide sequence ID" value="NC_003210.1"/>
</dbReference>
<dbReference type="RefSeq" id="WP_010989789.1">
    <property type="nucleotide sequence ID" value="NZ_CP149495.1"/>
</dbReference>
<dbReference type="PDB" id="2P7K">
    <property type="method" value="X-ray"/>
    <property type="resolution" value="3.30 A"/>
    <property type="chains" value="A/B=1-133"/>
</dbReference>
<dbReference type="PDB" id="2P7L">
    <property type="method" value="X-ray"/>
    <property type="resolution" value="2.20 A"/>
    <property type="chains" value="A/B/C/D/E/F=1-133"/>
</dbReference>
<dbReference type="PDB" id="2P7M">
    <property type="method" value="X-ray"/>
    <property type="resolution" value="1.85 A"/>
    <property type="chains" value="A/B/C/D/E/F=1-133"/>
</dbReference>
<dbReference type="PDB" id="2P7O">
    <property type="method" value="X-ray"/>
    <property type="resolution" value="1.44 A"/>
    <property type="chains" value="A/B=1-133"/>
</dbReference>
<dbReference type="PDB" id="2P7P">
    <property type="method" value="X-ray"/>
    <property type="resolution" value="2.17 A"/>
    <property type="chains" value="A/B/C/D/E/F=1-133"/>
</dbReference>
<dbReference type="PDBsum" id="2P7K"/>
<dbReference type="PDBsum" id="2P7L"/>
<dbReference type="PDBsum" id="2P7M"/>
<dbReference type="PDBsum" id="2P7O"/>
<dbReference type="PDBsum" id="2P7P"/>
<dbReference type="SMR" id="Q8Y6I2"/>
<dbReference type="STRING" id="169963.gene:17594383"/>
<dbReference type="PaxDb" id="169963-lmo1702"/>
<dbReference type="EnsemblBacteria" id="CAC99780">
    <property type="protein sequence ID" value="CAC99780"/>
    <property type="gene ID" value="CAC99780"/>
</dbReference>
<dbReference type="GeneID" id="985982"/>
<dbReference type="KEGG" id="lmo:lmo1702"/>
<dbReference type="PATRIC" id="fig|169963.11.peg.1745"/>
<dbReference type="eggNOG" id="COG0346">
    <property type="taxonomic scope" value="Bacteria"/>
</dbReference>
<dbReference type="HOGENOM" id="CLU_121356_1_0_9"/>
<dbReference type="OrthoDB" id="192739at2"/>
<dbReference type="PhylomeDB" id="Q8Y6I2"/>
<dbReference type="BioCyc" id="LMON169963:LMO1702-MONOMER"/>
<dbReference type="EvolutionaryTrace" id="Q8Y6I2"/>
<dbReference type="Proteomes" id="UP000000817">
    <property type="component" value="Chromosome"/>
</dbReference>
<dbReference type="GO" id="GO:0005737">
    <property type="term" value="C:cytoplasm"/>
    <property type="evidence" value="ECO:0007669"/>
    <property type="project" value="UniProtKB-SubCell"/>
</dbReference>
<dbReference type="GO" id="GO:0046872">
    <property type="term" value="F:metal ion binding"/>
    <property type="evidence" value="ECO:0007669"/>
    <property type="project" value="UniProtKB-KW"/>
</dbReference>
<dbReference type="GO" id="GO:0046677">
    <property type="term" value="P:response to antibiotic"/>
    <property type="evidence" value="ECO:0007669"/>
    <property type="project" value="UniProtKB-KW"/>
</dbReference>
<dbReference type="CDD" id="cd08364">
    <property type="entry name" value="FosX"/>
    <property type="match status" value="1"/>
</dbReference>
<dbReference type="Gene3D" id="3.10.180.10">
    <property type="entry name" value="2,3-Dihydroxybiphenyl 1,2-Dioxygenase, domain 1"/>
    <property type="match status" value="1"/>
</dbReference>
<dbReference type="InterPro" id="IPR051332">
    <property type="entry name" value="Fosfomycin_Res_Enzymes"/>
</dbReference>
<dbReference type="InterPro" id="IPR037434">
    <property type="entry name" value="FosX"/>
</dbReference>
<dbReference type="InterPro" id="IPR029068">
    <property type="entry name" value="Glyas_Bleomycin-R_OHBP_Dase"/>
</dbReference>
<dbReference type="InterPro" id="IPR004360">
    <property type="entry name" value="Glyas_Fos-R_dOase_dom"/>
</dbReference>
<dbReference type="InterPro" id="IPR037523">
    <property type="entry name" value="VOC"/>
</dbReference>
<dbReference type="NCBIfam" id="NF000222">
    <property type="entry name" value="FosX"/>
    <property type="match status" value="1"/>
</dbReference>
<dbReference type="PANTHER" id="PTHR36113:SF6">
    <property type="entry name" value="FOSFOMYCIN RESISTANCE PROTEIN FOSX"/>
    <property type="match status" value="1"/>
</dbReference>
<dbReference type="PANTHER" id="PTHR36113">
    <property type="entry name" value="LYASE, PUTATIVE-RELATED-RELATED"/>
    <property type="match status" value="1"/>
</dbReference>
<dbReference type="Pfam" id="PF00903">
    <property type="entry name" value="Glyoxalase"/>
    <property type="match status" value="1"/>
</dbReference>
<dbReference type="SUPFAM" id="SSF54593">
    <property type="entry name" value="Glyoxalase/Bleomycin resistance protein/Dihydroxybiphenyl dioxygenase"/>
    <property type="match status" value="1"/>
</dbReference>
<dbReference type="PROSITE" id="PS51819">
    <property type="entry name" value="VOC"/>
    <property type="match status" value="1"/>
</dbReference>
<keyword id="KW-0002">3D-structure</keyword>
<keyword id="KW-0046">Antibiotic resistance</keyword>
<keyword id="KW-0963">Cytoplasm</keyword>
<keyword id="KW-0464">Manganese</keyword>
<keyword id="KW-0479">Metal-binding</keyword>
<keyword id="KW-1185">Reference proteome</keyword>
<feature type="chain" id="PRO_0000164046" description="Fosfomycin resistance protein FosX">
    <location>
        <begin position="1"/>
        <end position="133"/>
    </location>
</feature>
<feature type="domain" description="VOC" evidence="2">
    <location>
        <begin position="4"/>
        <end position="122"/>
    </location>
</feature>
<feature type="active site" description="Proton acceptor" evidence="4">
    <location>
        <position position="44"/>
    </location>
</feature>
<feature type="binding site" evidence="1">
    <location>
        <position position="7"/>
    </location>
    <ligand>
        <name>Mn(2+)</name>
        <dbReference type="ChEBI" id="CHEBI:29035"/>
    </ligand>
</feature>
<feature type="binding site" evidence="1">
    <location>
        <position position="69"/>
    </location>
    <ligand>
        <name>Mn(2+)</name>
        <dbReference type="ChEBI" id="CHEBI:29035"/>
    </ligand>
</feature>
<feature type="binding site" evidence="1">
    <location>
        <position position="118"/>
    </location>
    <ligand>
        <name>Mn(2+)</name>
        <dbReference type="ChEBI" id="CHEBI:29035"/>
    </ligand>
</feature>
<feature type="mutagenesis site" description="Almost no activity." evidence="3">
    <original>E</original>
    <variation>G</variation>
    <location>
        <position position="44"/>
    </location>
</feature>
<feature type="strand" evidence="8">
    <location>
        <begin position="4"/>
        <end position="13"/>
    </location>
</feature>
<feature type="helix" evidence="8">
    <location>
        <begin position="15"/>
        <end position="26"/>
    </location>
</feature>
<feature type="strand" evidence="7">
    <location>
        <begin position="29"/>
        <end position="33"/>
    </location>
</feature>
<feature type="helix" evidence="9">
    <location>
        <begin position="34"/>
        <end position="36"/>
    </location>
</feature>
<feature type="helix" evidence="6">
    <location>
        <begin position="37"/>
        <end position="39"/>
    </location>
</feature>
<feature type="strand" evidence="8">
    <location>
        <begin position="44"/>
        <end position="49"/>
    </location>
</feature>
<feature type="strand" evidence="8">
    <location>
        <begin position="52"/>
        <end position="58"/>
    </location>
</feature>
<feature type="strand" evidence="8">
    <location>
        <begin position="69"/>
        <end position="73"/>
    </location>
</feature>
<feature type="helix" evidence="8">
    <location>
        <begin position="76"/>
        <end position="78"/>
    </location>
</feature>
<feature type="helix" evidence="8">
    <location>
        <begin position="79"/>
        <end position="89"/>
    </location>
</feature>
<feature type="strand" evidence="5">
    <location>
        <begin position="101"/>
        <end position="103"/>
    </location>
</feature>
<feature type="strand" evidence="8">
    <location>
        <begin position="106"/>
        <end position="110"/>
    </location>
</feature>
<feature type="strand" evidence="8">
    <location>
        <begin position="112"/>
        <end position="114"/>
    </location>
</feature>
<feature type="strand" evidence="8">
    <location>
        <begin position="116"/>
        <end position="120"/>
    </location>
</feature>
<feature type="turn" evidence="6">
    <location>
        <begin position="124"/>
        <end position="127"/>
    </location>
</feature>
<feature type="helix" evidence="8">
    <location>
        <begin position="128"/>
        <end position="131"/>
    </location>
</feature>
<organism>
    <name type="scientific">Listeria monocytogenes serovar 1/2a (strain ATCC BAA-679 / EGD-e)</name>
    <dbReference type="NCBI Taxonomy" id="169963"/>
    <lineage>
        <taxon>Bacteria</taxon>
        <taxon>Bacillati</taxon>
        <taxon>Bacillota</taxon>
        <taxon>Bacilli</taxon>
        <taxon>Bacillales</taxon>
        <taxon>Listeriaceae</taxon>
        <taxon>Listeria</taxon>
    </lineage>
</organism>
<proteinExistence type="evidence at protein level"/>
<reference key="1">
    <citation type="journal article" date="2001" name="Science">
        <title>Comparative genomics of Listeria species.</title>
        <authorList>
            <person name="Glaser P."/>
            <person name="Frangeul L."/>
            <person name="Buchrieser C."/>
            <person name="Rusniok C."/>
            <person name="Amend A."/>
            <person name="Baquero F."/>
            <person name="Berche P."/>
            <person name="Bloecker H."/>
            <person name="Brandt P."/>
            <person name="Chakraborty T."/>
            <person name="Charbit A."/>
            <person name="Chetouani F."/>
            <person name="Couve E."/>
            <person name="de Daruvar A."/>
            <person name="Dehoux P."/>
            <person name="Domann E."/>
            <person name="Dominguez-Bernal G."/>
            <person name="Duchaud E."/>
            <person name="Durant L."/>
            <person name="Dussurget O."/>
            <person name="Entian K.-D."/>
            <person name="Fsihi H."/>
            <person name="Garcia-del Portillo F."/>
            <person name="Garrido P."/>
            <person name="Gautier L."/>
            <person name="Goebel W."/>
            <person name="Gomez-Lopez N."/>
            <person name="Hain T."/>
            <person name="Hauf J."/>
            <person name="Jackson D."/>
            <person name="Jones L.-M."/>
            <person name="Kaerst U."/>
            <person name="Kreft J."/>
            <person name="Kuhn M."/>
            <person name="Kunst F."/>
            <person name="Kurapkat G."/>
            <person name="Madueno E."/>
            <person name="Maitournam A."/>
            <person name="Mata Vicente J."/>
            <person name="Ng E."/>
            <person name="Nedjari H."/>
            <person name="Nordsiek G."/>
            <person name="Novella S."/>
            <person name="de Pablos B."/>
            <person name="Perez-Diaz J.-C."/>
            <person name="Purcell R."/>
            <person name="Remmel B."/>
            <person name="Rose M."/>
            <person name="Schlueter T."/>
            <person name="Simoes N."/>
            <person name="Tierrez A."/>
            <person name="Vazquez-Boland J.-A."/>
            <person name="Voss H."/>
            <person name="Wehland J."/>
            <person name="Cossart P."/>
        </authorList>
    </citation>
    <scope>NUCLEOTIDE SEQUENCE [LARGE SCALE GENOMIC DNA]</scope>
    <source>
        <strain>ATCC BAA-679 / EGD-e</strain>
    </source>
</reference>
<reference key="2">
    <citation type="journal article" date="2003" name="J. Am. Chem. Soc.">
        <title>Mechanistic diversity of fosfomycin resistance in pathogenic microorganisms.</title>
        <authorList>
            <person name="Fillgrove K.L."/>
            <person name="Pakhomova S."/>
            <person name="Newcomer M.E."/>
            <person name="Armstrong R.N."/>
        </authorList>
    </citation>
    <scope>FUNCTION</scope>
    <scope>COFACTOR</scope>
    <scope>MUTAGENESIS OF GLU-44</scope>
    <source>
        <strain>ATCC BAA-679 / EGD-e</strain>
    </source>
</reference>
<sequence>MISGLSHITLIVKDLNKTTTFLREIFNAEEIYSSGDQTFSLSKEKFFLIAGLWICIMEGDSLQEQTYNHIAFRIQSEEVDEYIERIKSLGVEIKPERPRVEGEGRSIYFYDFDNHLFELHAGTLEERLKRYHE</sequence>
<protein>
    <recommendedName>
        <fullName>Fosfomycin resistance protein FosX</fullName>
    </recommendedName>
</protein>
<accession>Q8Y6I2</accession>
<evidence type="ECO:0000250" key="1"/>
<evidence type="ECO:0000255" key="2">
    <source>
        <dbReference type="PROSITE-ProRule" id="PRU01163"/>
    </source>
</evidence>
<evidence type="ECO:0000269" key="3">
    <source>
    </source>
</evidence>
<evidence type="ECO:0000305" key="4"/>
<evidence type="ECO:0007829" key="5">
    <source>
        <dbReference type="PDB" id="2P7K"/>
    </source>
</evidence>
<evidence type="ECO:0007829" key="6">
    <source>
        <dbReference type="PDB" id="2P7L"/>
    </source>
</evidence>
<evidence type="ECO:0007829" key="7">
    <source>
        <dbReference type="PDB" id="2P7M"/>
    </source>
</evidence>
<evidence type="ECO:0007829" key="8">
    <source>
        <dbReference type="PDB" id="2P7O"/>
    </source>
</evidence>
<evidence type="ECO:0007829" key="9">
    <source>
        <dbReference type="PDB" id="2P7P"/>
    </source>
</evidence>
<gene>
    <name type="primary">fosX</name>
    <name type="ordered locus">lmo1702</name>
</gene>
<name>FOSX_LISMO</name>
<comment type="function">
    <text evidence="3">Catalyzes the hydration of fosfomycin.</text>
</comment>
<comment type="cofactor">
    <cofactor evidence="3">
        <name>Mn(2+)</name>
        <dbReference type="ChEBI" id="CHEBI:29035"/>
    </cofactor>
</comment>
<comment type="subunit">
    <text evidence="1">Homodimer.</text>
</comment>
<comment type="subcellular location">
    <subcellularLocation>
        <location evidence="1">Cytoplasm</location>
    </subcellularLocation>
</comment>
<comment type="similarity">
    <text evidence="4">Belongs to the fosfomycin resistance protein family.</text>
</comment>